<reference key="1">
    <citation type="submission" date="2007-07" db="EMBL/GenBank/DDBJ databases">
        <title>Complete genome sequence of Campylobacter jejuni subsp doylei 269.97 isolated from human blood.</title>
        <authorList>
            <person name="Fouts D.E."/>
            <person name="Mongodin E.F."/>
            <person name="Puiu D."/>
            <person name="Sebastian Y."/>
            <person name="Miller W.G."/>
            <person name="Mandrell R.E."/>
            <person name="Lastovica A.J."/>
            <person name="Nelson K.E."/>
        </authorList>
    </citation>
    <scope>NUCLEOTIDE SEQUENCE [LARGE SCALE GENOMIC DNA]</scope>
    <source>
        <strain>ATCC BAA-1458 / RM4099 / 269.97</strain>
    </source>
</reference>
<protein>
    <recommendedName>
        <fullName evidence="1">Large ribosomal subunit protein uL4</fullName>
    </recommendedName>
    <alternativeName>
        <fullName evidence="3">50S ribosomal protein L4</fullName>
    </alternativeName>
</protein>
<gene>
    <name evidence="1" type="primary">rplD</name>
    <name type="ordered locus">JJD26997_2080</name>
</gene>
<proteinExistence type="inferred from homology"/>
<comment type="function">
    <text evidence="1">One of the primary rRNA binding proteins, this protein initially binds near the 5'-end of the 23S rRNA. It is important during the early stages of 50S assembly. It makes multiple contacts with different domains of the 23S rRNA in the assembled 50S subunit and ribosome.</text>
</comment>
<comment type="function">
    <text evidence="1">Forms part of the polypeptide exit tunnel.</text>
</comment>
<comment type="subunit">
    <text evidence="1">Part of the 50S ribosomal subunit.</text>
</comment>
<comment type="similarity">
    <text evidence="1">Belongs to the universal ribosomal protein uL4 family.</text>
</comment>
<dbReference type="EMBL" id="CP000768">
    <property type="protein sequence ID" value="ABS44402.1"/>
    <property type="molecule type" value="Genomic_DNA"/>
</dbReference>
<dbReference type="SMR" id="A7H655"/>
<dbReference type="KEGG" id="cjd:JJD26997_2080"/>
<dbReference type="HOGENOM" id="CLU_041575_5_2_7"/>
<dbReference type="Proteomes" id="UP000002302">
    <property type="component" value="Chromosome"/>
</dbReference>
<dbReference type="GO" id="GO:1990904">
    <property type="term" value="C:ribonucleoprotein complex"/>
    <property type="evidence" value="ECO:0007669"/>
    <property type="project" value="UniProtKB-KW"/>
</dbReference>
<dbReference type="GO" id="GO:0005840">
    <property type="term" value="C:ribosome"/>
    <property type="evidence" value="ECO:0007669"/>
    <property type="project" value="UniProtKB-KW"/>
</dbReference>
<dbReference type="GO" id="GO:0019843">
    <property type="term" value="F:rRNA binding"/>
    <property type="evidence" value="ECO:0007669"/>
    <property type="project" value="UniProtKB-UniRule"/>
</dbReference>
<dbReference type="GO" id="GO:0003735">
    <property type="term" value="F:structural constituent of ribosome"/>
    <property type="evidence" value="ECO:0007669"/>
    <property type="project" value="InterPro"/>
</dbReference>
<dbReference type="GO" id="GO:0006412">
    <property type="term" value="P:translation"/>
    <property type="evidence" value="ECO:0007669"/>
    <property type="project" value="UniProtKB-UniRule"/>
</dbReference>
<dbReference type="FunFam" id="3.40.1370.10:FF:000008">
    <property type="entry name" value="50S ribosomal protein L4"/>
    <property type="match status" value="1"/>
</dbReference>
<dbReference type="Gene3D" id="3.40.1370.10">
    <property type="match status" value="1"/>
</dbReference>
<dbReference type="HAMAP" id="MF_01328_B">
    <property type="entry name" value="Ribosomal_uL4_B"/>
    <property type="match status" value="1"/>
</dbReference>
<dbReference type="InterPro" id="IPR002136">
    <property type="entry name" value="Ribosomal_uL4"/>
</dbReference>
<dbReference type="InterPro" id="IPR013005">
    <property type="entry name" value="Ribosomal_uL4-like"/>
</dbReference>
<dbReference type="InterPro" id="IPR023574">
    <property type="entry name" value="Ribosomal_uL4_dom_sf"/>
</dbReference>
<dbReference type="NCBIfam" id="TIGR03953">
    <property type="entry name" value="rplD_bact"/>
    <property type="match status" value="1"/>
</dbReference>
<dbReference type="PANTHER" id="PTHR10746">
    <property type="entry name" value="50S RIBOSOMAL PROTEIN L4"/>
    <property type="match status" value="1"/>
</dbReference>
<dbReference type="PANTHER" id="PTHR10746:SF6">
    <property type="entry name" value="LARGE RIBOSOMAL SUBUNIT PROTEIN UL4M"/>
    <property type="match status" value="1"/>
</dbReference>
<dbReference type="Pfam" id="PF00573">
    <property type="entry name" value="Ribosomal_L4"/>
    <property type="match status" value="1"/>
</dbReference>
<dbReference type="SUPFAM" id="SSF52166">
    <property type="entry name" value="Ribosomal protein L4"/>
    <property type="match status" value="1"/>
</dbReference>
<keyword id="KW-0687">Ribonucleoprotein</keyword>
<keyword id="KW-0689">Ribosomal protein</keyword>
<keyword id="KW-0694">RNA-binding</keyword>
<keyword id="KW-0699">rRNA-binding</keyword>
<accession>A7H655</accession>
<evidence type="ECO:0000255" key="1">
    <source>
        <dbReference type="HAMAP-Rule" id="MF_01328"/>
    </source>
</evidence>
<evidence type="ECO:0000256" key="2">
    <source>
        <dbReference type="SAM" id="MobiDB-lite"/>
    </source>
</evidence>
<evidence type="ECO:0000305" key="3"/>
<feature type="chain" id="PRO_1000052377" description="Large ribosomal subunit protein uL4">
    <location>
        <begin position="1"/>
        <end position="204"/>
    </location>
</feature>
<feature type="region of interest" description="Disordered" evidence="2">
    <location>
        <begin position="49"/>
        <end position="75"/>
    </location>
</feature>
<name>RL4_CAMJD</name>
<sequence length="204" mass="22206">MSKVVVLNDKLEKAGELDLPSKYAEVNPHNLYLYVKSYLASLRANTAHTKGRSDVSGGGKKPWRQKGRGGARAGSTRTNVWVGGAVAFGPTNERNYFQKVNKKQKRLAFERALADKAAKGALFTADSLAIESGKTKDANAVIKKLGVKDVLIVKDLLDEKTLLAYRNLANCYVVDVAEVNAYLVSVFNAVIMEKSALESITKEG</sequence>
<organism>
    <name type="scientific">Campylobacter jejuni subsp. doylei (strain ATCC BAA-1458 / RM4099 / 269.97)</name>
    <dbReference type="NCBI Taxonomy" id="360109"/>
    <lineage>
        <taxon>Bacteria</taxon>
        <taxon>Pseudomonadati</taxon>
        <taxon>Campylobacterota</taxon>
        <taxon>Epsilonproteobacteria</taxon>
        <taxon>Campylobacterales</taxon>
        <taxon>Campylobacteraceae</taxon>
        <taxon>Campylobacter</taxon>
    </lineage>
</organism>